<geneLocation type="mitochondrion"/>
<accession>Q7Y5X9</accession>
<proteinExistence type="inferred from homology"/>
<evidence type="ECO:0000250" key="1"/>
<evidence type="ECO:0000250" key="2">
    <source>
        <dbReference type="UniProtKB" id="P00157"/>
    </source>
</evidence>
<evidence type="ECO:0000255" key="3">
    <source>
        <dbReference type="PROSITE-ProRule" id="PRU00967"/>
    </source>
</evidence>
<evidence type="ECO:0000255" key="4">
    <source>
        <dbReference type="PROSITE-ProRule" id="PRU00968"/>
    </source>
</evidence>
<gene>
    <name type="primary">MT-CYB</name>
    <name type="synonym">COB</name>
    <name type="synonym">CYTB</name>
    <name type="synonym">MTCYB</name>
</gene>
<organism>
    <name type="scientific">Lionycteris spurrelli</name>
    <name type="common">Chestnut long-tongued bat</name>
    <dbReference type="NCBI Taxonomy" id="148090"/>
    <lineage>
        <taxon>Eukaryota</taxon>
        <taxon>Metazoa</taxon>
        <taxon>Chordata</taxon>
        <taxon>Craniata</taxon>
        <taxon>Vertebrata</taxon>
        <taxon>Euteleostomi</taxon>
        <taxon>Mammalia</taxon>
        <taxon>Eutheria</taxon>
        <taxon>Laurasiatheria</taxon>
        <taxon>Chiroptera</taxon>
        <taxon>Yangochiroptera</taxon>
        <taxon>Phyllostomidae</taxon>
        <taxon>Lonchophyllinae</taxon>
        <taxon>Lionycteris</taxon>
    </lineage>
</organism>
<name>CYB_LIOSP</name>
<protein>
    <recommendedName>
        <fullName>Cytochrome b</fullName>
    </recommendedName>
    <alternativeName>
        <fullName>Complex III subunit 3</fullName>
    </alternativeName>
    <alternativeName>
        <fullName>Complex III subunit III</fullName>
    </alternativeName>
    <alternativeName>
        <fullName>Cytochrome b-c1 complex subunit 3</fullName>
    </alternativeName>
    <alternativeName>
        <fullName>Ubiquinol-cytochrome-c reductase complex cytochrome b subunit</fullName>
    </alternativeName>
</protein>
<sequence>MTNIRKTHPLLKILNSSFVDLPAPSNLSAWWNFGSLLGVCLALQILTGLFLAMHYTADTATAFNSVTHICRDVNYGWLLRYLHANGASMFFICLYIHVGRGLYYGSYTYTETWNVGILLLFAVMATAFMGYVLPWGQMSFWGATVITNLLSAIPYIGTELVQWIWGGFSVDKATLTRFFAFHFLFPFIVTALVMVHLLFLHETGSNNPTGIPSDPDMIPFHPYYTIKDILGFLMMLTVLSALVLFSPDLLGDPDNYTPANPLNTPPHIKPEWYFLFAYAILRSIPNKLGGVLALVLSILILAVVPALHMSKQRSMMFRPLSQCLFWLLVATLLTLTWIGGQPVEYPYVIIGQVASVLYFMILLVLMPLISIVENKLLKW</sequence>
<dbReference type="EMBL" id="AF423096">
    <property type="protein sequence ID" value="AAP80164.1"/>
    <property type="molecule type" value="Genomic_DNA"/>
</dbReference>
<dbReference type="EMBL" id="AF423097">
    <property type="protein sequence ID" value="AAP80165.1"/>
    <property type="molecule type" value="Genomic_DNA"/>
</dbReference>
<dbReference type="EMBL" id="AF423098">
    <property type="protein sequence ID" value="AAP80166.1"/>
    <property type="molecule type" value="Genomic_DNA"/>
</dbReference>
<dbReference type="EMBL" id="AF423099">
    <property type="protein sequence ID" value="AAP80167.1"/>
    <property type="molecule type" value="Genomic_DNA"/>
</dbReference>
<dbReference type="EMBL" id="AF423100">
    <property type="protein sequence ID" value="AAP80168.1"/>
    <property type="molecule type" value="Genomic_DNA"/>
</dbReference>
<dbReference type="SMR" id="Q7Y5X9"/>
<dbReference type="GO" id="GO:0005743">
    <property type="term" value="C:mitochondrial inner membrane"/>
    <property type="evidence" value="ECO:0007669"/>
    <property type="project" value="UniProtKB-SubCell"/>
</dbReference>
<dbReference type="GO" id="GO:0045275">
    <property type="term" value="C:respiratory chain complex III"/>
    <property type="evidence" value="ECO:0007669"/>
    <property type="project" value="InterPro"/>
</dbReference>
<dbReference type="GO" id="GO:0046872">
    <property type="term" value="F:metal ion binding"/>
    <property type="evidence" value="ECO:0007669"/>
    <property type="project" value="UniProtKB-KW"/>
</dbReference>
<dbReference type="GO" id="GO:0008121">
    <property type="term" value="F:ubiquinol-cytochrome-c reductase activity"/>
    <property type="evidence" value="ECO:0007669"/>
    <property type="project" value="InterPro"/>
</dbReference>
<dbReference type="GO" id="GO:0006122">
    <property type="term" value="P:mitochondrial electron transport, ubiquinol to cytochrome c"/>
    <property type="evidence" value="ECO:0007669"/>
    <property type="project" value="TreeGrafter"/>
</dbReference>
<dbReference type="CDD" id="cd00290">
    <property type="entry name" value="cytochrome_b_C"/>
    <property type="match status" value="1"/>
</dbReference>
<dbReference type="CDD" id="cd00284">
    <property type="entry name" value="Cytochrome_b_N"/>
    <property type="match status" value="1"/>
</dbReference>
<dbReference type="FunFam" id="1.20.810.10:FF:000002">
    <property type="entry name" value="Cytochrome b"/>
    <property type="match status" value="1"/>
</dbReference>
<dbReference type="Gene3D" id="1.20.810.10">
    <property type="entry name" value="Cytochrome Bc1 Complex, Chain C"/>
    <property type="match status" value="1"/>
</dbReference>
<dbReference type="InterPro" id="IPR005798">
    <property type="entry name" value="Cyt_b/b6_C"/>
</dbReference>
<dbReference type="InterPro" id="IPR036150">
    <property type="entry name" value="Cyt_b/b6_C_sf"/>
</dbReference>
<dbReference type="InterPro" id="IPR005797">
    <property type="entry name" value="Cyt_b/b6_N"/>
</dbReference>
<dbReference type="InterPro" id="IPR027387">
    <property type="entry name" value="Cytb/b6-like_sf"/>
</dbReference>
<dbReference type="InterPro" id="IPR030689">
    <property type="entry name" value="Cytochrome_b"/>
</dbReference>
<dbReference type="InterPro" id="IPR048260">
    <property type="entry name" value="Cytochrome_b_C_euk/bac"/>
</dbReference>
<dbReference type="InterPro" id="IPR048259">
    <property type="entry name" value="Cytochrome_b_N_euk/bac"/>
</dbReference>
<dbReference type="InterPro" id="IPR016174">
    <property type="entry name" value="Di-haem_cyt_TM"/>
</dbReference>
<dbReference type="PANTHER" id="PTHR19271">
    <property type="entry name" value="CYTOCHROME B"/>
    <property type="match status" value="1"/>
</dbReference>
<dbReference type="PANTHER" id="PTHR19271:SF16">
    <property type="entry name" value="CYTOCHROME B"/>
    <property type="match status" value="1"/>
</dbReference>
<dbReference type="Pfam" id="PF00032">
    <property type="entry name" value="Cytochrom_B_C"/>
    <property type="match status" value="1"/>
</dbReference>
<dbReference type="Pfam" id="PF00033">
    <property type="entry name" value="Cytochrome_B"/>
    <property type="match status" value="1"/>
</dbReference>
<dbReference type="PIRSF" id="PIRSF038885">
    <property type="entry name" value="COB"/>
    <property type="match status" value="1"/>
</dbReference>
<dbReference type="SUPFAM" id="SSF81648">
    <property type="entry name" value="a domain/subunit of cytochrome bc1 complex (Ubiquinol-cytochrome c reductase)"/>
    <property type="match status" value="1"/>
</dbReference>
<dbReference type="SUPFAM" id="SSF81342">
    <property type="entry name" value="Transmembrane di-heme cytochromes"/>
    <property type="match status" value="1"/>
</dbReference>
<dbReference type="PROSITE" id="PS51003">
    <property type="entry name" value="CYTB_CTER"/>
    <property type="match status" value="1"/>
</dbReference>
<dbReference type="PROSITE" id="PS51002">
    <property type="entry name" value="CYTB_NTER"/>
    <property type="match status" value="1"/>
</dbReference>
<comment type="function">
    <text evidence="2">Component of the ubiquinol-cytochrome c reductase complex (complex III or cytochrome b-c1 complex) that is part of the mitochondrial respiratory chain. The b-c1 complex mediates electron transfer from ubiquinol to cytochrome c. Contributes to the generation of a proton gradient across the mitochondrial membrane that is then used for ATP synthesis.</text>
</comment>
<comment type="cofactor">
    <cofactor evidence="2">
        <name>heme b</name>
        <dbReference type="ChEBI" id="CHEBI:60344"/>
    </cofactor>
    <text evidence="2">Binds 2 heme b groups non-covalently.</text>
</comment>
<comment type="subunit">
    <text evidence="2">The cytochrome bc1 complex contains 11 subunits: 3 respiratory subunits (MT-CYB, CYC1 and UQCRFS1), 2 core proteins (UQCRC1 and UQCRC2) and 6 low-molecular weight proteins (UQCRH/QCR6, UQCRB/QCR7, UQCRQ/QCR8, UQCR10/QCR9, UQCR11/QCR10 and a cleavage product of UQCRFS1). This cytochrome bc1 complex then forms a dimer.</text>
</comment>
<comment type="subcellular location">
    <subcellularLocation>
        <location evidence="2">Mitochondrion inner membrane</location>
        <topology evidence="2">Multi-pass membrane protein</topology>
    </subcellularLocation>
</comment>
<comment type="miscellaneous">
    <text evidence="1">Heme 1 (or BL or b562) is low-potential and absorbs at about 562 nm, and heme 2 (or BH or b566) is high-potential and absorbs at about 566 nm.</text>
</comment>
<comment type="similarity">
    <text evidence="3 4">Belongs to the cytochrome b family.</text>
</comment>
<comment type="caution">
    <text evidence="2">The full-length protein contains only eight transmembrane helices, not nine as predicted by bioinformatics tools.</text>
</comment>
<feature type="chain" id="PRO_0000061124" description="Cytochrome b">
    <location>
        <begin position="1"/>
        <end position="379"/>
    </location>
</feature>
<feature type="transmembrane region" description="Helical" evidence="2">
    <location>
        <begin position="33"/>
        <end position="53"/>
    </location>
</feature>
<feature type="transmembrane region" description="Helical" evidence="2">
    <location>
        <begin position="77"/>
        <end position="98"/>
    </location>
</feature>
<feature type="transmembrane region" description="Helical" evidence="2">
    <location>
        <begin position="113"/>
        <end position="133"/>
    </location>
</feature>
<feature type="transmembrane region" description="Helical" evidence="2">
    <location>
        <begin position="178"/>
        <end position="198"/>
    </location>
</feature>
<feature type="transmembrane region" description="Helical" evidence="2">
    <location>
        <begin position="226"/>
        <end position="246"/>
    </location>
</feature>
<feature type="transmembrane region" description="Helical" evidence="2">
    <location>
        <begin position="288"/>
        <end position="308"/>
    </location>
</feature>
<feature type="transmembrane region" description="Helical" evidence="2">
    <location>
        <begin position="320"/>
        <end position="340"/>
    </location>
</feature>
<feature type="transmembrane region" description="Helical" evidence="2">
    <location>
        <begin position="347"/>
        <end position="367"/>
    </location>
</feature>
<feature type="binding site" description="axial binding residue" evidence="2">
    <location>
        <position position="83"/>
    </location>
    <ligand>
        <name>heme b</name>
        <dbReference type="ChEBI" id="CHEBI:60344"/>
        <label>b562</label>
    </ligand>
    <ligandPart>
        <name>Fe</name>
        <dbReference type="ChEBI" id="CHEBI:18248"/>
    </ligandPart>
</feature>
<feature type="binding site" description="axial binding residue" evidence="2">
    <location>
        <position position="97"/>
    </location>
    <ligand>
        <name>heme b</name>
        <dbReference type="ChEBI" id="CHEBI:60344"/>
        <label>b566</label>
    </ligand>
    <ligandPart>
        <name>Fe</name>
        <dbReference type="ChEBI" id="CHEBI:18248"/>
    </ligandPart>
</feature>
<feature type="binding site" description="axial binding residue" evidence="2">
    <location>
        <position position="182"/>
    </location>
    <ligand>
        <name>heme b</name>
        <dbReference type="ChEBI" id="CHEBI:60344"/>
        <label>b562</label>
    </ligand>
    <ligandPart>
        <name>Fe</name>
        <dbReference type="ChEBI" id="CHEBI:18248"/>
    </ligandPart>
</feature>
<feature type="binding site" description="axial binding residue" evidence="2">
    <location>
        <position position="196"/>
    </location>
    <ligand>
        <name>heme b</name>
        <dbReference type="ChEBI" id="CHEBI:60344"/>
        <label>b566</label>
    </ligand>
    <ligandPart>
        <name>Fe</name>
        <dbReference type="ChEBI" id="CHEBI:18248"/>
    </ligandPart>
</feature>
<feature type="binding site" evidence="2">
    <location>
        <position position="201"/>
    </location>
    <ligand>
        <name>a ubiquinone</name>
        <dbReference type="ChEBI" id="CHEBI:16389"/>
    </ligand>
</feature>
<keyword id="KW-0249">Electron transport</keyword>
<keyword id="KW-0349">Heme</keyword>
<keyword id="KW-0408">Iron</keyword>
<keyword id="KW-0472">Membrane</keyword>
<keyword id="KW-0479">Metal-binding</keyword>
<keyword id="KW-0496">Mitochondrion</keyword>
<keyword id="KW-0999">Mitochondrion inner membrane</keyword>
<keyword id="KW-0679">Respiratory chain</keyword>
<keyword id="KW-0812">Transmembrane</keyword>
<keyword id="KW-1133">Transmembrane helix</keyword>
<keyword id="KW-0813">Transport</keyword>
<keyword id="KW-0830">Ubiquinone</keyword>
<reference key="1">
    <citation type="journal article" date="2004" name="J. Mammal.">
        <title>Phylogeny of the Lonchophyllini (Chiroptera: Phyllostomidae).</title>
        <authorList>
            <person name="Davalos L.M."/>
            <person name="Jansa S.A."/>
        </authorList>
    </citation>
    <scope>NUCLEOTIDE SEQUENCE [GENOMIC DNA]</scope>
</reference>